<protein>
    <recommendedName>
        <fullName evidence="1">Small ribosomal subunit protein uS8</fullName>
    </recommendedName>
    <alternativeName>
        <fullName evidence="2">30S ribosomal protein S8</fullName>
    </alternativeName>
</protein>
<proteinExistence type="inferred from homology"/>
<feature type="chain" id="PRO_0000290852" description="Small ribosomal subunit protein uS8">
    <location>
        <begin position="1"/>
        <end position="131"/>
    </location>
</feature>
<comment type="function">
    <text evidence="1">One of the primary rRNA binding proteins, it binds directly to 16S rRNA central domain where it helps coordinate assembly of the platform of the 30S subunit.</text>
</comment>
<comment type="subunit">
    <text evidence="1">Part of the 30S ribosomal subunit. Contacts proteins S5 and S12.</text>
</comment>
<comment type="similarity">
    <text evidence="1">Belongs to the universal ribosomal protein uS8 family.</text>
</comment>
<sequence>MNISDPLGDMLTRIRNAQMRGMSKTTSPASKLRARVLDVLTDEGYIRGYAEIEKSGHKTLEIELKYYEGQPVISEIKRVSKPGRRVYSSVSDIPLVRNGLGISILSTSQGVMSDNAARAKNVGGEVLCRVF</sequence>
<evidence type="ECO:0000255" key="1">
    <source>
        <dbReference type="HAMAP-Rule" id="MF_01302"/>
    </source>
</evidence>
<evidence type="ECO:0000305" key="2"/>
<keyword id="KW-1185">Reference proteome</keyword>
<keyword id="KW-0687">Ribonucleoprotein</keyword>
<keyword id="KW-0689">Ribosomal protein</keyword>
<keyword id="KW-0694">RNA-binding</keyword>
<keyword id="KW-0699">rRNA-binding</keyword>
<reference key="1">
    <citation type="journal article" date="2006" name="J. Bacteriol.">
        <title>Comparative genomic evidence for a close relationship between the dimorphic prosthecate bacteria Hyphomonas neptunium and Caulobacter crescentus.</title>
        <authorList>
            <person name="Badger J.H."/>
            <person name="Hoover T.R."/>
            <person name="Brun Y.V."/>
            <person name="Weiner R.M."/>
            <person name="Laub M.T."/>
            <person name="Alexandre G."/>
            <person name="Mrazek J."/>
            <person name="Ren Q."/>
            <person name="Paulsen I.T."/>
            <person name="Nelson K.E."/>
            <person name="Khouri H.M."/>
            <person name="Radune D."/>
            <person name="Sosa J."/>
            <person name="Dodson R.J."/>
            <person name="Sullivan S.A."/>
            <person name="Rosovitz M.J."/>
            <person name="Madupu R."/>
            <person name="Brinkac L.M."/>
            <person name="Durkin A.S."/>
            <person name="Daugherty S.C."/>
            <person name="Kothari S.P."/>
            <person name="Giglio M.G."/>
            <person name="Zhou L."/>
            <person name="Haft D.H."/>
            <person name="Selengut J.D."/>
            <person name="Davidsen T.M."/>
            <person name="Yang Q."/>
            <person name="Zafar N."/>
            <person name="Ward N.L."/>
        </authorList>
    </citation>
    <scope>NUCLEOTIDE SEQUENCE [LARGE SCALE GENOMIC DNA]</scope>
    <source>
        <strain>ATCC 15444</strain>
    </source>
</reference>
<gene>
    <name evidence="1" type="primary">rpsH</name>
    <name type="ordered locus">HNE_2837</name>
</gene>
<organism>
    <name type="scientific">Hyphomonas neptunium (strain ATCC 15444)</name>
    <dbReference type="NCBI Taxonomy" id="228405"/>
    <lineage>
        <taxon>Bacteria</taxon>
        <taxon>Pseudomonadati</taxon>
        <taxon>Pseudomonadota</taxon>
        <taxon>Alphaproteobacteria</taxon>
        <taxon>Hyphomonadales</taxon>
        <taxon>Hyphomonadaceae</taxon>
        <taxon>Hyphomonas</taxon>
    </lineage>
</organism>
<dbReference type="EMBL" id="CP000158">
    <property type="protein sequence ID" value="ABI77949.1"/>
    <property type="molecule type" value="Genomic_DNA"/>
</dbReference>
<dbReference type="RefSeq" id="WP_011647812.1">
    <property type="nucleotide sequence ID" value="NC_008358.1"/>
</dbReference>
<dbReference type="SMR" id="Q0BYC8"/>
<dbReference type="STRING" id="228405.HNE_2837"/>
<dbReference type="KEGG" id="hne:HNE_2837"/>
<dbReference type="eggNOG" id="COG0096">
    <property type="taxonomic scope" value="Bacteria"/>
</dbReference>
<dbReference type="HOGENOM" id="CLU_098428_0_0_5"/>
<dbReference type="Proteomes" id="UP000001959">
    <property type="component" value="Chromosome"/>
</dbReference>
<dbReference type="GO" id="GO:1990904">
    <property type="term" value="C:ribonucleoprotein complex"/>
    <property type="evidence" value="ECO:0007669"/>
    <property type="project" value="UniProtKB-KW"/>
</dbReference>
<dbReference type="GO" id="GO:0005840">
    <property type="term" value="C:ribosome"/>
    <property type="evidence" value="ECO:0007669"/>
    <property type="project" value="UniProtKB-KW"/>
</dbReference>
<dbReference type="GO" id="GO:0019843">
    <property type="term" value="F:rRNA binding"/>
    <property type="evidence" value="ECO:0007669"/>
    <property type="project" value="UniProtKB-UniRule"/>
</dbReference>
<dbReference type="GO" id="GO:0003735">
    <property type="term" value="F:structural constituent of ribosome"/>
    <property type="evidence" value="ECO:0007669"/>
    <property type="project" value="InterPro"/>
</dbReference>
<dbReference type="GO" id="GO:0006412">
    <property type="term" value="P:translation"/>
    <property type="evidence" value="ECO:0007669"/>
    <property type="project" value="UniProtKB-UniRule"/>
</dbReference>
<dbReference type="FunFam" id="3.30.1370.30:FF:000002">
    <property type="entry name" value="30S ribosomal protein S8"/>
    <property type="match status" value="1"/>
</dbReference>
<dbReference type="FunFam" id="3.30.1490.10:FF:000001">
    <property type="entry name" value="30S ribosomal protein S8"/>
    <property type="match status" value="1"/>
</dbReference>
<dbReference type="Gene3D" id="3.30.1370.30">
    <property type="match status" value="1"/>
</dbReference>
<dbReference type="Gene3D" id="3.30.1490.10">
    <property type="match status" value="1"/>
</dbReference>
<dbReference type="HAMAP" id="MF_01302_B">
    <property type="entry name" value="Ribosomal_uS8_B"/>
    <property type="match status" value="1"/>
</dbReference>
<dbReference type="InterPro" id="IPR000630">
    <property type="entry name" value="Ribosomal_uS8"/>
</dbReference>
<dbReference type="InterPro" id="IPR047863">
    <property type="entry name" value="Ribosomal_uS8_CS"/>
</dbReference>
<dbReference type="InterPro" id="IPR035987">
    <property type="entry name" value="Ribosomal_uS8_sf"/>
</dbReference>
<dbReference type="NCBIfam" id="NF001109">
    <property type="entry name" value="PRK00136.1"/>
    <property type="match status" value="1"/>
</dbReference>
<dbReference type="PANTHER" id="PTHR11758">
    <property type="entry name" value="40S RIBOSOMAL PROTEIN S15A"/>
    <property type="match status" value="1"/>
</dbReference>
<dbReference type="Pfam" id="PF00410">
    <property type="entry name" value="Ribosomal_S8"/>
    <property type="match status" value="1"/>
</dbReference>
<dbReference type="SUPFAM" id="SSF56047">
    <property type="entry name" value="Ribosomal protein S8"/>
    <property type="match status" value="1"/>
</dbReference>
<dbReference type="PROSITE" id="PS00053">
    <property type="entry name" value="RIBOSOMAL_S8"/>
    <property type="match status" value="1"/>
</dbReference>
<name>RS8_HYPNA</name>
<accession>Q0BYC8</accession>